<dbReference type="EMBL" id="AF071248">
    <property type="protein sequence ID" value="AAD15941.1"/>
    <property type="molecule type" value="Genomic_DNA"/>
</dbReference>
<dbReference type="EMBL" id="CR382300">
    <property type="protein sequence ID" value="CAK10848.1"/>
    <property type="molecule type" value="Genomic_DNA"/>
</dbReference>
<dbReference type="EMBL" id="BC090700">
    <property type="protein sequence ID" value="AAH90700.1"/>
    <property type="molecule type" value="mRNA"/>
</dbReference>
<dbReference type="EMBL" id="DQ060535">
    <property type="protein sequence ID" value="AAY67913.1"/>
    <property type="molecule type" value="mRNA"/>
</dbReference>
<dbReference type="EMBL" id="Y14538">
    <property type="protein sequence ID" value="CAA74873.1"/>
    <property type="molecule type" value="mRNA"/>
</dbReference>
<dbReference type="RefSeq" id="NP_571607.2">
    <property type="nucleotide sequence ID" value="NM_131532.2"/>
</dbReference>
<dbReference type="SMR" id="Q9PWL6"/>
<dbReference type="FunCoup" id="Q9PWL6">
    <property type="interactions" value="1"/>
</dbReference>
<dbReference type="STRING" id="7955.ENSDARP00000140324"/>
<dbReference type="PaxDb" id="7955-ENSDARP00000009894"/>
<dbReference type="Ensembl" id="ENSDART00000166129">
    <property type="protein sequence ID" value="ENSDARP00000139889"/>
    <property type="gene ID" value="ENSDARG00000105013"/>
</dbReference>
<dbReference type="Ensembl" id="ENSDART00000168041">
    <property type="protein sequence ID" value="ENSDARP00000140324"/>
    <property type="gene ID" value="ENSDARG00000105013"/>
</dbReference>
<dbReference type="GeneID" id="58047"/>
<dbReference type="KEGG" id="dre:58047"/>
<dbReference type="AGR" id="ZFIN:ZDB-GENE-000823-1"/>
<dbReference type="CTD" id="58047"/>
<dbReference type="ZFIN" id="ZDB-GENE-000823-1">
    <property type="gene designation" value="hoxa9a"/>
</dbReference>
<dbReference type="eggNOG" id="KOG0487">
    <property type="taxonomic scope" value="Eukaryota"/>
</dbReference>
<dbReference type="HOGENOM" id="CLU_071854_0_0_1"/>
<dbReference type="InParanoid" id="Q9PWL6"/>
<dbReference type="OMA" id="GEHPEFT"/>
<dbReference type="OrthoDB" id="6159439at2759"/>
<dbReference type="PhylomeDB" id="Q9PWL6"/>
<dbReference type="TreeFam" id="TF317819"/>
<dbReference type="PRO" id="PR:Q9PWL6"/>
<dbReference type="Proteomes" id="UP000000437">
    <property type="component" value="Chromosome 19"/>
</dbReference>
<dbReference type="Bgee" id="ENSDARG00000105013">
    <property type="expression patterns" value="Expressed in tail bud paraxial mesoderm and 27 other cell types or tissues"/>
</dbReference>
<dbReference type="ExpressionAtlas" id="Q9PWL6">
    <property type="expression patterns" value="baseline"/>
</dbReference>
<dbReference type="GO" id="GO:0005634">
    <property type="term" value="C:nucleus"/>
    <property type="evidence" value="ECO:0000318"/>
    <property type="project" value="GO_Central"/>
</dbReference>
<dbReference type="GO" id="GO:0003700">
    <property type="term" value="F:DNA-binding transcription factor activity"/>
    <property type="evidence" value="ECO:0000318"/>
    <property type="project" value="GO_Central"/>
</dbReference>
<dbReference type="GO" id="GO:0000981">
    <property type="term" value="F:DNA-binding transcription factor activity, RNA polymerase II-specific"/>
    <property type="evidence" value="ECO:0007669"/>
    <property type="project" value="InterPro"/>
</dbReference>
<dbReference type="GO" id="GO:0000978">
    <property type="term" value="F:RNA polymerase II cis-regulatory region sequence-specific DNA binding"/>
    <property type="evidence" value="ECO:0000318"/>
    <property type="project" value="GO_Central"/>
</dbReference>
<dbReference type="GO" id="GO:0009952">
    <property type="term" value="P:anterior/posterior pattern specification"/>
    <property type="evidence" value="ECO:0000318"/>
    <property type="project" value="GO_Central"/>
</dbReference>
<dbReference type="GO" id="GO:0006351">
    <property type="term" value="P:DNA-templated transcription"/>
    <property type="evidence" value="ECO:0007669"/>
    <property type="project" value="InterPro"/>
</dbReference>
<dbReference type="GO" id="GO:0048704">
    <property type="term" value="P:embryonic skeletal system morphogenesis"/>
    <property type="evidence" value="ECO:0000318"/>
    <property type="project" value="GO_Central"/>
</dbReference>
<dbReference type="GO" id="GO:0009954">
    <property type="term" value="P:proximal/distal pattern formation"/>
    <property type="evidence" value="ECO:0000318"/>
    <property type="project" value="GO_Central"/>
</dbReference>
<dbReference type="GO" id="GO:0006357">
    <property type="term" value="P:regulation of transcription by RNA polymerase II"/>
    <property type="evidence" value="ECO:0000318"/>
    <property type="project" value="GO_Central"/>
</dbReference>
<dbReference type="CDD" id="cd00086">
    <property type="entry name" value="homeodomain"/>
    <property type="match status" value="1"/>
</dbReference>
<dbReference type="FunFam" id="1.10.10.60:FF:000166">
    <property type="entry name" value="homeobox protein Hox-C11"/>
    <property type="match status" value="1"/>
</dbReference>
<dbReference type="Gene3D" id="1.10.10.60">
    <property type="entry name" value="Homeodomain-like"/>
    <property type="match status" value="1"/>
</dbReference>
<dbReference type="InterPro" id="IPR050803">
    <property type="entry name" value="Abd-B_homeobox_TF"/>
</dbReference>
<dbReference type="InterPro" id="IPR001356">
    <property type="entry name" value="HD"/>
</dbReference>
<dbReference type="InterPro" id="IPR020479">
    <property type="entry name" value="HD_metazoa"/>
</dbReference>
<dbReference type="InterPro" id="IPR017970">
    <property type="entry name" value="Homeobox_CS"/>
</dbReference>
<dbReference type="InterPro" id="IPR009057">
    <property type="entry name" value="Homeodomain-like_sf"/>
</dbReference>
<dbReference type="InterPro" id="IPR006711">
    <property type="entry name" value="Hox9_activation_N"/>
</dbReference>
<dbReference type="InterPro" id="IPR017112">
    <property type="entry name" value="HXA9/HXB9/HXC9"/>
</dbReference>
<dbReference type="PANTHER" id="PTHR45970">
    <property type="entry name" value="AGAP004664-PA"/>
    <property type="match status" value="1"/>
</dbReference>
<dbReference type="PANTHER" id="PTHR45970:SF3">
    <property type="entry name" value="HOMEOBOX PROTEIN HOX-A9"/>
    <property type="match status" value="1"/>
</dbReference>
<dbReference type="Pfam" id="PF00046">
    <property type="entry name" value="Homeodomain"/>
    <property type="match status" value="1"/>
</dbReference>
<dbReference type="Pfam" id="PF04617">
    <property type="entry name" value="Hox9_act"/>
    <property type="match status" value="1"/>
</dbReference>
<dbReference type="PIRSF" id="PIRSF037109">
    <property type="entry name" value="Homeobox_Hox9"/>
    <property type="match status" value="1"/>
</dbReference>
<dbReference type="PRINTS" id="PR00024">
    <property type="entry name" value="HOMEOBOX"/>
</dbReference>
<dbReference type="SMART" id="SM00389">
    <property type="entry name" value="HOX"/>
    <property type="match status" value="1"/>
</dbReference>
<dbReference type="SUPFAM" id="SSF46689">
    <property type="entry name" value="Homeodomain-like"/>
    <property type="match status" value="1"/>
</dbReference>
<dbReference type="PROSITE" id="PS00027">
    <property type="entry name" value="HOMEOBOX_1"/>
    <property type="match status" value="1"/>
</dbReference>
<dbReference type="PROSITE" id="PS50071">
    <property type="entry name" value="HOMEOBOX_2"/>
    <property type="match status" value="1"/>
</dbReference>
<proteinExistence type="evidence at transcript level"/>
<comment type="function">
    <text evidence="1">Sequence-specific transcription factor which is part of a developmental regulatory system that provides cells with specific positional identities on the anterior-posterior axis.</text>
</comment>
<comment type="subcellular location">
    <subcellularLocation>
        <location evidence="2">Nucleus</location>
    </subcellularLocation>
</comment>
<comment type="developmental stage">
    <text evidence="4">At the 10-somite stage, expressed in the paraxial mesoderm with an anterior expression limit at somite 8. At the 20-somite stage, expressed within the developing CNS with an anterior expression limit adjacent to the somite 4/5 boundary.</text>
</comment>
<comment type="similarity">
    <text evidence="5">Belongs to the Abd-B homeobox family.</text>
</comment>
<feature type="chain" id="PRO_0000200084" description="Homeobox protein Hox-A9a">
    <location>
        <begin position="1"/>
        <end position="250"/>
    </location>
</feature>
<feature type="DNA-binding region" description="Homeobox" evidence="2">
    <location>
        <begin position="184"/>
        <end position="243"/>
    </location>
</feature>
<feature type="region of interest" description="Disordered" evidence="3">
    <location>
        <begin position="105"/>
        <end position="177"/>
    </location>
</feature>
<feature type="compositionally biased region" description="Basic and acidic residues" evidence="3">
    <location>
        <begin position="149"/>
        <end position="169"/>
    </location>
</feature>
<feature type="sequence conflict" description="In Ref. 1; AAD15941." evidence="5" ref="1">
    <original>KPGAD</original>
    <variation>NRALI</variation>
    <location>
        <begin position="166"/>
        <end position="170"/>
    </location>
</feature>
<keyword id="KW-0217">Developmental protein</keyword>
<keyword id="KW-0238">DNA-binding</keyword>
<keyword id="KW-0371">Homeobox</keyword>
<keyword id="KW-0539">Nucleus</keyword>
<keyword id="KW-1185">Reference proteome</keyword>
<keyword id="KW-0804">Transcription</keyword>
<keyword id="KW-0805">Transcription regulation</keyword>
<gene>
    <name type="primary">hoxa9a</name>
    <name type="synonym">hoxx9</name>
    <name type="ORF">zgc:110505</name>
</gene>
<accession>Q9PWL6</accession>
<accession>O57376</accession>
<accession>Q4PRA8</accession>
<accession>Q5CZU7</accession>
<sequence length="250" mass="28010">MSTSGALTGYYVDSIVIPGSEETRFSSGLGLIQHRPTILPADLSDLGPCTFPAKQPVYGTSDWGHIPTHFSTGVPSVYQPHAQPPVVGDYVQSWLLDSACGLPQTEPPTVNHNHAKSDTNETNDDGTEYSPHTILQPEVFTNGGCSTKTEAESSRTAEKSGDIEGKPGADPENPVSNWLHASSTRKKRCPYTKHQILELEKEFLFNTYLTRDRRYEVARLLNLTERQVKIWFQNRRMKMKKFNKNETKED</sequence>
<protein>
    <recommendedName>
        <fullName>Homeobox protein Hox-A9a</fullName>
        <shortName>Hoxx9</shortName>
    </recommendedName>
</protein>
<evidence type="ECO:0000250" key="1"/>
<evidence type="ECO:0000255" key="2">
    <source>
        <dbReference type="PROSITE-ProRule" id="PRU00108"/>
    </source>
</evidence>
<evidence type="ECO:0000256" key="3">
    <source>
        <dbReference type="SAM" id="MobiDB-lite"/>
    </source>
</evidence>
<evidence type="ECO:0000269" key="4">
    <source>
    </source>
</evidence>
<evidence type="ECO:0000305" key="5"/>
<name>HXA9A_DANRE</name>
<organism>
    <name type="scientific">Danio rerio</name>
    <name type="common">Zebrafish</name>
    <name type="synonym">Brachydanio rerio</name>
    <dbReference type="NCBI Taxonomy" id="7955"/>
    <lineage>
        <taxon>Eukaryota</taxon>
        <taxon>Metazoa</taxon>
        <taxon>Chordata</taxon>
        <taxon>Craniata</taxon>
        <taxon>Vertebrata</taxon>
        <taxon>Euteleostomi</taxon>
        <taxon>Actinopterygii</taxon>
        <taxon>Neopterygii</taxon>
        <taxon>Teleostei</taxon>
        <taxon>Ostariophysi</taxon>
        <taxon>Cypriniformes</taxon>
        <taxon>Danionidae</taxon>
        <taxon>Danioninae</taxon>
        <taxon>Danio</taxon>
    </lineage>
</organism>
<reference key="1">
    <citation type="journal article" date="1998" name="Science">
        <title>Zebrafish hox clusters and vertebrate genome evolution.</title>
        <authorList>
            <person name="Amores A."/>
            <person name="Force A."/>
            <person name="Yan Y.-L."/>
            <person name="Joly L."/>
            <person name="Amemiya C."/>
            <person name="Fritz A."/>
            <person name="Ho R.K."/>
            <person name="Langeland J."/>
            <person name="Prince V.E."/>
            <person name="Wang Y.-L."/>
            <person name="Westerfield M."/>
            <person name="Ekker M."/>
            <person name="Postlethwait J.H."/>
        </authorList>
    </citation>
    <scope>NUCLEOTIDE SEQUENCE [GENOMIC DNA]</scope>
</reference>
<reference key="2">
    <citation type="journal article" date="2013" name="Nature">
        <title>The zebrafish reference genome sequence and its relationship to the human genome.</title>
        <authorList>
            <person name="Howe K."/>
            <person name="Clark M.D."/>
            <person name="Torroja C.F."/>
            <person name="Torrance J."/>
            <person name="Berthelot C."/>
            <person name="Muffato M."/>
            <person name="Collins J.E."/>
            <person name="Humphray S."/>
            <person name="McLaren K."/>
            <person name="Matthews L."/>
            <person name="McLaren S."/>
            <person name="Sealy I."/>
            <person name="Caccamo M."/>
            <person name="Churcher C."/>
            <person name="Scott C."/>
            <person name="Barrett J.C."/>
            <person name="Koch R."/>
            <person name="Rauch G.J."/>
            <person name="White S."/>
            <person name="Chow W."/>
            <person name="Kilian B."/>
            <person name="Quintais L.T."/>
            <person name="Guerra-Assuncao J.A."/>
            <person name="Zhou Y."/>
            <person name="Gu Y."/>
            <person name="Yen J."/>
            <person name="Vogel J.H."/>
            <person name="Eyre T."/>
            <person name="Redmond S."/>
            <person name="Banerjee R."/>
            <person name="Chi J."/>
            <person name="Fu B."/>
            <person name="Langley E."/>
            <person name="Maguire S.F."/>
            <person name="Laird G.K."/>
            <person name="Lloyd D."/>
            <person name="Kenyon E."/>
            <person name="Donaldson S."/>
            <person name="Sehra H."/>
            <person name="Almeida-King J."/>
            <person name="Loveland J."/>
            <person name="Trevanion S."/>
            <person name="Jones M."/>
            <person name="Quail M."/>
            <person name="Willey D."/>
            <person name="Hunt A."/>
            <person name="Burton J."/>
            <person name="Sims S."/>
            <person name="McLay K."/>
            <person name="Plumb B."/>
            <person name="Davis J."/>
            <person name="Clee C."/>
            <person name="Oliver K."/>
            <person name="Clark R."/>
            <person name="Riddle C."/>
            <person name="Elliot D."/>
            <person name="Threadgold G."/>
            <person name="Harden G."/>
            <person name="Ware D."/>
            <person name="Begum S."/>
            <person name="Mortimore B."/>
            <person name="Kerry G."/>
            <person name="Heath P."/>
            <person name="Phillimore B."/>
            <person name="Tracey A."/>
            <person name="Corby N."/>
            <person name="Dunn M."/>
            <person name="Johnson C."/>
            <person name="Wood J."/>
            <person name="Clark S."/>
            <person name="Pelan S."/>
            <person name="Griffiths G."/>
            <person name="Smith M."/>
            <person name="Glithero R."/>
            <person name="Howden P."/>
            <person name="Barker N."/>
            <person name="Lloyd C."/>
            <person name="Stevens C."/>
            <person name="Harley J."/>
            <person name="Holt K."/>
            <person name="Panagiotidis G."/>
            <person name="Lovell J."/>
            <person name="Beasley H."/>
            <person name="Henderson C."/>
            <person name="Gordon D."/>
            <person name="Auger K."/>
            <person name="Wright D."/>
            <person name="Collins J."/>
            <person name="Raisen C."/>
            <person name="Dyer L."/>
            <person name="Leung K."/>
            <person name="Robertson L."/>
            <person name="Ambridge K."/>
            <person name="Leongamornlert D."/>
            <person name="McGuire S."/>
            <person name="Gilderthorp R."/>
            <person name="Griffiths C."/>
            <person name="Manthravadi D."/>
            <person name="Nichol S."/>
            <person name="Barker G."/>
            <person name="Whitehead S."/>
            <person name="Kay M."/>
            <person name="Brown J."/>
            <person name="Murnane C."/>
            <person name="Gray E."/>
            <person name="Humphries M."/>
            <person name="Sycamore N."/>
            <person name="Barker D."/>
            <person name="Saunders D."/>
            <person name="Wallis J."/>
            <person name="Babbage A."/>
            <person name="Hammond S."/>
            <person name="Mashreghi-Mohammadi M."/>
            <person name="Barr L."/>
            <person name="Martin S."/>
            <person name="Wray P."/>
            <person name="Ellington A."/>
            <person name="Matthews N."/>
            <person name="Ellwood M."/>
            <person name="Woodmansey R."/>
            <person name="Clark G."/>
            <person name="Cooper J."/>
            <person name="Tromans A."/>
            <person name="Grafham D."/>
            <person name="Skuce C."/>
            <person name="Pandian R."/>
            <person name="Andrews R."/>
            <person name="Harrison E."/>
            <person name="Kimberley A."/>
            <person name="Garnett J."/>
            <person name="Fosker N."/>
            <person name="Hall R."/>
            <person name="Garner P."/>
            <person name="Kelly D."/>
            <person name="Bird C."/>
            <person name="Palmer S."/>
            <person name="Gehring I."/>
            <person name="Berger A."/>
            <person name="Dooley C.M."/>
            <person name="Ersan-Urun Z."/>
            <person name="Eser C."/>
            <person name="Geiger H."/>
            <person name="Geisler M."/>
            <person name="Karotki L."/>
            <person name="Kirn A."/>
            <person name="Konantz J."/>
            <person name="Konantz M."/>
            <person name="Oberlander M."/>
            <person name="Rudolph-Geiger S."/>
            <person name="Teucke M."/>
            <person name="Lanz C."/>
            <person name="Raddatz G."/>
            <person name="Osoegawa K."/>
            <person name="Zhu B."/>
            <person name="Rapp A."/>
            <person name="Widaa S."/>
            <person name="Langford C."/>
            <person name="Yang F."/>
            <person name="Schuster S.C."/>
            <person name="Carter N.P."/>
            <person name="Harrow J."/>
            <person name="Ning Z."/>
            <person name="Herrero J."/>
            <person name="Searle S.M."/>
            <person name="Enright A."/>
            <person name="Geisler R."/>
            <person name="Plasterk R.H."/>
            <person name="Lee C."/>
            <person name="Westerfield M."/>
            <person name="de Jong P.J."/>
            <person name="Zon L.I."/>
            <person name="Postlethwait J.H."/>
            <person name="Nusslein-Volhard C."/>
            <person name="Hubbard T.J."/>
            <person name="Roest Crollius H."/>
            <person name="Rogers J."/>
            <person name="Stemple D.L."/>
        </authorList>
    </citation>
    <scope>NUCLEOTIDE SEQUENCE [LARGE SCALE GENOMIC DNA]</scope>
    <source>
        <strain>Tuebingen</strain>
    </source>
</reference>
<reference key="3">
    <citation type="submission" date="2005-02" db="EMBL/GenBank/DDBJ databases">
        <authorList>
            <consortium name="NIH - Zebrafish Gene Collection (ZGC) project"/>
        </authorList>
    </citation>
    <scope>NUCLEOTIDE SEQUENCE [LARGE SCALE MRNA]</scope>
    <source>
        <tissue>Embryo</tissue>
    </source>
</reference>
<reference key="4">
    <citation type="journal article" date="2005" name="Evol. Dev.">
        <title>Genomic annotation and transcriptome analysis of the zebrafish (Danio rerio) hox complex with description of a novel member, hoxb13a.</title>
        <authorList>
            <person name="Corredor-Adamez M."/>
            <person name="Welten M.C.M."/>
            <person name="Spaink H.P."/>
            <person name="Jeffery J.E."/>
            <person name="Schoon R.T."/>
            <person name="de Bakker M.A.G."/>
            <person name="Bagowski C.P."/>
            <person name="Meijer A.H."/>
            <person name="Verbeek F.J."/>
            <person name="Richardson M.K."/>
        </authorList>
    </citation>
    <scope>NUCLEOTIDE SEQUENCE [MRNA] OF 71-181</scope>
    <source>
        <strain>Tuebingen</strain>
    </source>
</reference>
<reference key="5">
    <citation type="journal article" date="1998" name="Development">
        <title>Zebrafish hox genes: genomic organization and modified colinear expression patterns in the trunk.</title>
        <authorList>
            <person name="Prince V.E."/>
            <person name="Joly L."/>
            <person name="Ekker M."/>
            <person name="Ho R.K."/>
        </authorList>
    </citation>
    <scope>NUCLEOTIDE SEQUENCE [MRNA] OF 214-250</scope>
    <scope>DEVELOPMENTAL STAGE</scope>
    <source>
        <tissue>Embryo</tissue>
    </source>
</reference>